<comment type="function">
    <text evidence="1">Ligates lysine onto the cytidine present at position 34 of the AUA codon-specific tRNA(Ile) that contains the anticodon CAU, in an ATP-dependent manner. Cytidine is converted to lysidine, thus changing the amino acid specificity of the tRNA from methionine to isoleucine.</text>
</comment>
<comment type="catalytic activity">
    <reaction evidence="1">
        <text>cytidine(34) in tRNA(Ile2) + L-lysine + ATP = lysidine(34) in tRNA(Ile2) + AMP + diphosphate + H(+)</text>
        <dbReference type="Rhea" id="RHEA:43744"/>
        <dbReference type="Rhea" id="RHEA-COMP:10625"/>
        <dbReference type="Rhea" id="RHEA-COMP:10670"/>
        <dbReference type="ChEBI" id="CHEBI:15378"/>
        <dbReference type="ChEBI" id="CHEBI:30616"/>
        <dbReference type="ChEBI" id="CHEBI:32551"/>
        <dbReference type="ChEBI" id="CHEBI:33019"/>
        <dbReference type="ChEBI" id="CHEBI:82748"/>
        <dbReference type="ChEBI" id="CHEBI:83665"/>
        <dbReference type="ChEBI" id="CHEBI:456215"/>
        <dbReference type="EC" id="6.3.4.19"/>
    </reaction>
</comment>
<comment type="subcellular location">
    <subcellularLocation>
        <location evidence="1">Cytoplasm</location>
    </subcellularLocation>
</comment>
<comment type="domain">
    <text>The N-terminal region contains the highly conserved SGGXDS motif, predicted to be a P-loop motif involved in ATP binding.</text>
</comment>
<comment type="similarity">
    <text evidence="1">Belongs to the tRNA(Ile)-lysidine synthase family.</text>
</comment>
<accession>Q6MLS8</accession>
<dbReference type="EC" id="6.3.4.19" evidence="1"/>
<dbReference type="EMBL" id="BX842651">
    <property type="protein sequence ID" value="CAE79778.1"/>
    <property type="molecule type" value="Genomic_DNA"/>
</dbReference>
<dbReference type="RefSeq" id="WP_011164380.1">
    <property type="nucleotide sequence ID" value="NC_005363.1"/>
</dbReference>
<dbReference type="SMR" id="Q6MLS8"/>
<dbReference type="STRING" id="264462.Bd1927"/>
<dbReference type="GeneID" id="93012882"/>
<dbReference type="KEGG" id="bba:Bd1927"/>
<dbReference type="eggNOG" id="COG0037">
    <property type="taxonomic scope" value="Bacteria"/>
</dbReference>
<dbReference type="HOGENOM" id="CLU_018869_3_0_7"/>
<dbReference type="Proteomes" id="UP000008080">
    <property type="component" value="Chromosome"/>
</dbReference>
<dbReference type="GO" id="GO:0005737">
    <property type="term" value="C:cytoplasm"/>
    <property type="evidence" value="ECO:0007669"/>
    <property type="project" value="UniProtKB-SubCell"/>
</dbReference>
<dbReference type="GO" id="GO:0005524">
    <property type="term" value="F:ATP binding"/>
    <property type="evidence" value="ECO:0007669"/>
    <property type="project" value="UniProtKB-UniRule"/>
</dbReference>
<dbReference type="GO" id="GO:0032267">
    <property type="term" value="F:tRNA(Ile)-lysidine synthase activity"/>
    <property type="evidence" value="ECO:0007669"/>
    <property type="project" value="UniProtKB-EC"/>
</dbReference>
<dbReference type="GO" id="GO:0006400">
    <property type="term" value="P:tRNA modification"/>
    <property type="evidence" value="ECO:0007669"/>
    <property type="project" value="UniProtKB-UniRule"/>
</dbReference>
<dbReference type="CDD" id="cd01992">
    <property type="entry name" value="TilS_N"/>
    <property type="match status" value="1"/>
</dbReference>
<dbReference type="Gene3D" id="3.40.50.620">
    <property type="entry name" value="HUPs"/>
    <property type="match status" value="1"/>
</dbReference>
<dbReference type="HAMAP" id="MF_01161">
    <property type="entry name" value="tRNA_Ile_lys_synt"/>
    <property type="match status" value="1"/>
</dbReference>
<dbReference type="InterPro" id="IPR014729">
    <property type="entry name" value="Rossmann-like_a/b/a_fold"/>
</dbReference>
<dbReference type="InterPro" id="IPR011063">
    <property type="entry name" value="TilS/TtcA_N"/>
</dbReference>
<dbReference type="InterPro" id="IPR012094">
    <property type="entry name" value="tRNA_Ile_lys_synt"/>
</dbReference>
<dbReference type="InterPro" id="IPR012795">
    <property type="entry name" value="tRNA_Ile_lys_synt_N"/>
</dbReference>
<dbReference type="NCBIfam" id="TIGR02432">
    <property type="entry name" value="lysidine_TilS_N"/>
    <property type="match status" value="1"/>
</dbReference>
<dbReference type="PANTHER" id="PTHR43033">
    <property type="entry name" value="TRNA(ILE)-LYSIDINE SYNTHASE-RELATED"/>
    <property type="match status" value="1"/>
</dbReference>
<dbReference type="PANTHER" id="PTHR43033:SF1">
    <property type="entry name" value="TRNA(ILE)-LYSIDINE SYNTHASE-RELATED"/>
    <property type="match status" value="1"/>
</dbReference>
<dbReference type="Pfam" id="PF01171">
    <property type="entry name" value="ATP_bind_3"/>
    <property type="match status" value="1"/>
</dbReference>
<dbReference type="SUPFAM" id="SSF52402">
    <property type="entry name" value="Adenine nucleotide alpha hydrolases-like"/>
    <property type="match status" value="1"/>
</dbReference>
<organism>
    <name type="scientific">Bdellovibrio bacteriovorus (strain ATCC 15356 / DSM 50701 / NCIMB 9529 / HD100)</name>
    <dbReference type="NCBI Taxonomy" id="264462"/>
    <lineage>
        <taxon>Bacteria</taxon>
        <taxon>Pseudomonadati</taxon>
        <taxon>Bdellovibrionota</taxon>
        <taxon>Bdellovibrionia</taxon>
        <taxon>Bdellovibrionales</taxon>
        <taxon>Pseudobdellovibrionaceae</taxon>
        <taxon>Bdellovibrio</taxon>
    </lineage>
</organism>
<keyword id="KW-0067">ATP-binding</keyword>
<keyword id="KW-0963">Cytoplasm</keyword>
<keyword id="KW-0436">Ligase</keyword>
<keyword id="KW-0547">Nucleotide-binding</keyword>
<keyword id="KW-1185">Reference proteome</keyword>
<keyword id="KW-0819">tRNA processing</keyword>
<gene>
    <name evidence="1" type="primary">tilS</name>
    <name type="ordered locus">Bd1927</name>
</gene>
<feature type="chain" id="PRO_0000181654" description="tRNA(Ile)-lysidine synthase">
    <location>
        <begin position="1"/>
        <end position="316"/>
    </location>
</feature>
<feature type="binding site" evidence="1">
    <location>
        <begin position="33"/>
        <end position="38"/>
    </location>
    <ligand>
        <name>ATP</name>
        <dbReference type="ChEBI" id="CHEBI:30616"/>
    </ligand>
</feature>
<proteinExistence type="inferred from homology"/>
<name>TILS_BDEBA</name>
<sequence>MKLSKAKQDLDHHVWKLIKLHSLQDKKILVALSGGTDSVALLRSLTKVHKKNLLGACYFHHGEDSNQEYRKEAQEFCEKLCKKLEIEFYPLRASQLAKSEAEYRELRYEALDRLKKEQGFELVATGHHRDDLLETRLIRLIRGTGAQGFAAMHVLRDGLFRPLLEISKKELKKYLREERLRSFEDPTNKALDPLRNWLREEWLKSLERRARGSTAALARSLETIAQEIENRPWGDLLGQNEAYKTQGLRRSFYLTLSPFEQKRLLAQYLFSLGKRDFSQSHLEEIQKRLDKSQKVITFKVAGCQWEVNAEQIKVQS</sequence>
<evidence type="ECO:0000255" key="1">
    <source>
        <dbReference type="HAMAP-Rule" id="MF_01161"/>
    </source>
</evidence>
<reference key="1">
    <citation type="journal article" date="2004" name="Science">
        <title>A predator unmasked: life cycle of Bdellovibrio bacteriovorus from a genomic perspective.</title>
        <authorList>
            <person name="Rendulic S."/>
            <person name="Jagtap P."/>
            <person name="Rosinus A."/>
            <person name="Eppinger M."/>
            <person name="Baar C."/>
            <person name="Lanz C."/>
            <person name="Keller H."/>
            <person name="Lambert C."/>
            <person name="Evans K.J."/>
            <person name="Goesmann A."/>
            <person name="Meyer F."/>
            <person name="Sockett R.E."/>
            <person name="Schuster S.C."/>
        </authorList>
    </citation>
    <scope>NUCLEOTIDE SEQUENCE [LARGE SCALE GENOMIC DNA]</scope>
    <source>
        <strain>ATCC 15356 / DSM 50701 / NCIMB 9529 / HD100</strain>
    </source>
</reference>
<protein>
    <recommendedName>
        <fullName evidence="1">tRNA(Ile)-lysidine synthase</fullName>
        <ecNumber evidence="1">6.3.4.19</ecNumber>
    </recommendedName>
    <alternativeName>
        <fullName evidence="1">tRNA(Ile)-2-lysyl-cytidine synthase</fullName>
    </alternativeName>
    <alternativeName>
        <fullName evidence="1">tRNA(Ile)-lysidine synthetase</fullName>
    </alternativeName>
</protein>